<keyword id="KW-0963">Cytoplasm</keyword>
<keyword id="KW-0489">Methyltransferase</keyword>
<keyword id="KW-0698">rRNA processing</keyword>
<keyword id="KW-0949">S-adenosyl-L-methionine</keyword>
<keyword id="KW-0808">Transferase</keyword>
<sequence length="378" mass="42252">MSHVDDGFRSLTLKRFPQTDDVNPLLAWEAADEYLLQQLDETEIRGPVLILNDTFGALSCALAEHSPYSIGDSYLSELGTRENLRHNGIAESSVTFLNSTADYPQAPGVVLIKVPKTLALLEQQLRALRKVVTAQTRIIAGAKARDIHTSTLELFEKVLGPTTTTLAWKKARLINCTFSHPQLADAPQTLSWKLEDTGWTIHNHANVFSRTGLDIGARFFMQHLPENLDGEIVDLGCGNGVIGLSLLAKNPQANVVFVDESPMAVDSSRLNVETNLPEAFERCEFMINNALSGVEPFRFNAVFCNPPFHQKHALTDNIAWEMFHHARRCLKINGELYIVANRHLDYFHKLKKIFGNCATIATNNKFVILKAVKQGHRR</sequence>
<protein>
    <recommendedName>
        <fullName evidence="1">Ribosomal RNA large subunit methyltransferase G</fullName>
        <ecNumber evidence="1">2.1.1.174</ecNumber>
    </recommendedName>
    <alternativeName>
        <fullName evidence="1">23S rRNA m2G1835 methyltransferase</fullName>
    </alternativeName>
    <alternativeName>
        <fullName evidence="1">rRNA (guanine-N(2)-)-methyltransferase RlmG</fullName>
    </alternativeName>
</protein>
<organism>
    <name type="scientific">Salmonella gallinarum (strain 287/91 / NCTC 13346)</name>
    <dbReference type="NCBI Taxonomy" id="550538"/>
    <lineage>
        <taxon>Bacteria</taxon>
        <taxon>Pseudomonadati</taxon>
        <taxon>Pseudomonadota</taxon>
        <taxon>Gammaproteobacteria</taxon>
        <taxon>Enterobacterales</taxon>
        <taxon>Enterobacteriaceae</taxon>
        <taxon>Salmonella</taxon>
    </lineage>
</organism>
<feature type="chain" id="PRO_0000366494" description="Ribosomal RNA large subunit methyltransferase G">
    <location>
        <begin position="1"/>
        <end position="378"/>
    </location>
</feature>
<name>RLMG_SALG2</name>
<comment type="function">
    <text evidence="1">Specifically methylates the guanine in position 1835 (m2G1835) of 23S rRNA.</text>
</comment>
<comment type="catalytic activity">
    <reaction evidence="1">
        <text>guanosine(1835) in 23S rRNA + S-adenosyl-L-methionine = N(2)-methylguanosine(1835) in 23S rRNA + S-adenosyl-L-homocysteine + H(+)</text>
        <dbReference type="Rhea" id="RHEA:42744"/>
        <dbReference type="Rhea" id="RHEA-COMP:10217"/>
        <dbReference type="Rhea" id="RHEA-COMP:10218"/>
        <dbReference type="ChEBI" id="CHEBI:15378"/>
        <dbReference type="ChEBI" id="CHEBI:57856"/>
        <dbReference type="ChEBI" id="CHEBI:59789"/>
        <dbReference type="ChEBI" id="CHEBI:74269"/>
        <dbReference type="ChEBI" id="CHEBI:74481"/>
        <dbReference type="EC" id="2.1.1.174"/>
    </reaction>
</comment>
<comment type="subcellular location">
    <subcellularLocation>
        <location evidence="1">Cytoplasm</location>
    </subcellularLocation>
</comment>
<comment type="similarity">
    <text evidence="1">Belongs to the methyltransferase superfamily. RlmG family.</text>
</comment>
<accession>B5REH7</accession>
<gene>
    <name evidence="1" type="primary">rlmG</name>
    <name type="ordered locus">SG3116</name>
</gene>
<evidence type="ECO:0000255" key="1">
    <source>
        <dbReference type="HAMAP-Rule" id="MF_01859"/>
    </source>
</evidence>
<dbReference type="EC" id="2.1.1.174" evidence="1"/>
<dbReference type="EMBL" id="AM933173">
    <property type="protein sequence ID" value="CAR38917.1"/>
    <property type="molecule type" value="Genomic_DNA"/>
</dbReference>
<dbReference type="RefSeq" id="WP_000019999.1">
    <property type="nucleotide sequence ID" value="NC_011274.1"/>
</dbReference>
<dbReference type="SMR" id="B5REH7"/>
<dbReference type="KEGG" id="seg:SG3116"/>
<dbReference type="HOGENOM" id="CLU_040288_4_0_6"/>
<dbReference type="Proteomes" id="UP000008321">
    <property type="component" value="Chromosome"/>
</dbReference>
<dbReference type="GO" id="GO:0005737">
    <property type="term" value="C:cytoplasm"/>
    <property type="evidence" value="ECO:0007669"/>
    <property type="project" value="UniProtKB-SubCell"/>
</dbReference>
<dbReference type="GO" id="GO:0052916">
    <property type="term" value="F:23S rRNA (guanine(1835)-N(2))-methyltransferase activity"/>
    <property type="evidence" value="ECO:0007669"/>
    <property type="project" value="UniProtKB-EC"/>
</dbReference>
<dbReference type="GO" id="GO:0003676">
    <property type="term" value="F:nucleic acid binding"/>
    <property type="evidence" value="ECO:0007669"/>
    <property type="project" value="InterPro"/>
</dbReference>
<dbReference type="CDD" id="cd02440">
    <property type="entry name" value="AdoMet_MTases"/>
    <property type="match status" value="1"/>
</dbReference>
<dbReference type="FunFam" id="3.40.50.150:FF:000046">
    <property type="entry name" value="Ribosomal RNA large subunit methyltransferase G"/>
    <property type="match status" value="1"/>
</dbReference>
<dbReference type="FunFam" id="3.40.50.150:FF:000047">
    <property type="entry name" value="Ribosomal RNA large subunit methyltransferase G"/>
    <property type="match status" value="1"/>
</dbReference>
<dbReference type="Gene3D" id="3.40.50.150">
    <property type="entry name" value="Vaccinia Virus protein VP39"/>
    <property type="match status" value="2"/>
</dbReference>
<dbReference type="HAMAP" id="MF_01859">
    <property type="entry name" value="23SrRNA_methyltr_G"/>
    <property type="match status" value="1"/>
</dbReference>
<dbReference type="InterPro" id="IPR002052">
    <property type="entry name" value="DNA_methylase_N6_adenine_CS"/>
</dbReference>
<dbReference type="InterPro" id="IPR017237">
    <property type="entry name" value="rRNA_m2G-MeTrfase_RlmG"/>
</dbReference>
<dbReference type="InterPro" id="IPR046977">
    <property type="entry name" value="RsmC/RlmG"/>
</dbReference>
<dbReference type="InterPro" id="IPR029063">
    <property type="entry name" value="SAM-dependent_MTases_sf"/>
</dbReference>
<dbReference type="InterPro" id="IPR007848">
    <property type="entry name" value="Small_mtfrase_dom"/>
</dbReference>
<dbReference type="NCBIfam" id="NF011577">
    <property type="entry name" value="PRK15001.1"/>
    <property type="match status" value="1"/>
</dbReference>
<dbReference type="PANTHER" id="PTHR47816:SF5">
    <property type="entry name" value="RIBOSOMAL RNA LARGE SUBUNIT METHYLTRANSFERASE G"/>
    <property type="match status" value="1"/>
</dbReference>
<dbReference type="PANTHER" id="PTHR47816">
    <property type="entry name" value="RIBOSOMAL RNA SMALL SUBUNIT METHYLTRANSFERASE C"/>
    <property type="match status" value="1"/>
</dbReference>
<dbReference type="Pfam" id="PF05175">
    <property type="entry name" value="MTS"/>
    <property type="match status" value="1"/>
</dbReference>
<dbReference type="PIRSF" id="PIRSF037565">
    <property type="entry name" value="RRNA_m2G_Mtase_RsmD_prd"/>
    <property type="match status" value="1"/>
</dbReference>
<dbReference type="SUPFAM" id="SSF53335">
    <property type="entry name" value="S-adenosyl-L-methionine-dependent methyltransferases"/>
    <property type="match status" value="1"/>
</dbReference>
<reference key="1">
    <citation type="journal article" date="2008" name="Genome Res.">
        <title>Comparative genome analysis of Salmonella enteritidis PT4 and Salmonella gallinarum 287/91 provides insights into evolutionary and host adaptation pathways.</title>
        <authorList>
            <person name="Thomson N.R."/>
            <person name="Clayton D.J."/>
            <person name="Windhorst D."/>
            <person name="Vernikos G."/>
            <person name="Davidson S."/>
            <person name="Churcher C."/>
            <person name="Quail M.A."/>
            <person name="Stevens M."/>
            <person name="Jones M.A."/>
            <person name="Watson M."/>
            <person name="Barron A."/>
            <person name="Layton A."/>
            <person name="Pickard D."/>
            <person name="Kingsley R.A."/>
            <person name="Bignell A."/>
            <person name="Clark L."/>
            <person name="Harris B."/>
            <person name="Ormond D."/>
            <person name="Abdellah Z."/>
            <person name="Brooks K."/>
            <person name="Cherevach I."/>
            <person name="Chillingworth T."/>
            <person name="Woodward J."/>
            <person name="Norberczak H."/>
            <person name="Lord A."/>
            <person name="Arrowsmith C."/>
            <person name="Jagels K."/>
            <person name="Moule S."/>
            <person name="Mungall K."/>
            <person name="Saunders M."/>
            <person name="Whitehead S."/>
            <person name="Chabalgoity J.A."/>
            <person name="Maskell D."/>
            <person name="Humphreys T."/>
            <person name="Roberts M."/>
            <person name="Barrow P.A."/>
            <person name="Dougan G."/>
            <person name="Parkhill J."/>
        </authorList>
    </citation>
    <scope>NUCLEOTIDE SEQUENCE [LARGE SCALE GENOMIC DNA]</scope>
    <source>
        <strain>287/91 / NCTC 13346</strain>
    </source>
</reference>
<proteinExistence type="inferred from homology"/>